<feature type="chain" id="PRO_0000053858" description="Pleckstrin">
    <location>
        <begin position="1"/>
        <end position="351"/>
    </location>
</feature>
<feature type="domain" description="PH 1" evidence="4">
    <location>
        <begin position="4"/>
        <end position="101"/>
    </location>
</feature>
<feature type="domain" description="DEP" evidence="3">
    <location>
        <begin position="136"/>
        <end position="221"/>
    </location>
</feature>
<feature type="domain" description="PH 2" evidence="4">
    <location>
        <begin position="244"/>
        <end position="348"/>
    </location>
</feature>
<feature type="modified residue" description="N6-acetyllysine" evidence="2">
    <location>
        <position position="64"/>
    </location>
</feature>
<feature type="modified residue" description="Phosphoserine" evidence="2">
    <location>
        <position position="113"/>
    </location>
</feature>
<feature type="modified residue" description="Phosphoserine" evidence="2">
    <location>
        <position position="117"/>
    </location>
</feature>
<comment type="function">
    <text evidence="1">Major protein kinase C substrate of platelets.</text>
</comment>
<reference key="1">
    <citation type="submission" date="2004-03" db="EMBL/GenBank/DDBJ databases">
        <title>Canine pleckstrin.</title>
        <authorList>
            <person name="Boudreaux M.K."/>
        </authorList>
    </citation>
    <scope>NUCLEOTIDE SEQUENCE [MRNA]</scope>
    <source>
        <tissue>Platelet</tissue>
    </source>
</reference>
<proteinExistence type="evidence at transcript level"/>
<keyword id="KW-0007">Acetylation</keyword>
<keyword id="KW-0597">Phosphoprotein</keyword>
<keyword id="KW-1185">Reference proteome</keyword>
<keyword id="KW-0677">Repeat</keyword>
<evidence type="ECO:0000250" key="1"/>
<evidence type="ECO:0000250" key="2">
    <source>
        <dbReference type="UniProtKB" id="P08567"/>
    </source>
</evidence>
<evidence type="ECO:0000255" key="3">
    <source>
        <dbReference type="PROSITE-ProRule" id="PRU00066"/>
    </source>
</evidence>
<evidence type="ECO:0000255" key="4">
    <source>
        <dbReference type="PROSITE-ProRule" id="PRU00145"/>
    </source>
</evidence>
<accession>Q6Q308</accession>
<organism>
    <name type="scientific">Canis lupus familiaris</name>
    <name type="common">Dog</name>
    <name type="synonym">Canis familiaris</name>
    <dbReference type="NCBI Taxonomy" id="9615"/>
    <lineage>
        <taxon>Eukaryota</taxon>
        <taxon>Metazoa</taxon>
        <taxon>Chordata</taxon>
        <taxon>Craniata</taxon>
        <taxon>Vertebrata</taxon>
        <taxon>Euteleostomi</taxon>
        <taxon>Mammalia</taxon>
        <taxon>Eutheria</taxon>
        <taxon>Laurasiatheria</taxon>
        <taxon>Carnivora</taxon>
        <taxon>Caniformia</taxon>
        <taxon>Canidae</taxon>
        <taxon>Canis</taxon>
    </lineage>
</organism>
<dbReference type="EMBL" id="AY563035">
    <property type="protein sequence ID" value="AAS67002.1"/>
    <property type="molecule type" value="mRNA"/>
</dbReference>
<dbReference type="RefSeq" id="NP_001003363.1">
    <property type="nucleotide sequence ID" value="NM_001003363.3"/>
</dbReference>
<dbReference type="SMR" id="Q6Q308"/>
<dbReference type="FunCoup" id="Q6Q308">
    <property type="interactions" value="161"/>
</dbReference>
<dbReference type="STRING" id="9615.ENSCAFP00000053827"/>
<dbReference type="PaxDb" id="9612-ENSCAFP00000004841"/>
<dbReference type="Ensembl" id="ENSCAFT00000005230.5">
    <property type="protein sequence ID" value="ENSCAFP00000004841.3"/>
    <property type="gene ID" value="ENSCAFG00000003260.5"/>
</dbReference>
<dbReference type="Ensembl" id="ENSCAFT00030043432.1">
    <property type="protein sequence ID" value="ENSCAFP00030037916.1"/>
    <property type="gene ID" value="ENSCAFG00030023596.1"/>
</dbReference>
<dbReference type="Ensembl" id="ENSCAFT00040011877.1">
    <property type="protein sequence ID" value="ENSCAFP00040010298.1"/>
    <property type="gene ID" value="ENSCAFG00040006341.1"/>
</dbReference>
<dbReference type="Ensembl" id="ENSCAFT00845041284.1">
    <property type="protein sequence ID" value="ENSCAFP00845032366.1"/>
    <property type="gene ID" value="ENSCAFG00845023363.1"/>
</dbReference>
<dbReference type="GeneID" id="442956"/>
<dbReference type="KEGG" id="cfa:442956"/>
<dbReference type="CTD" id="5341"/>
<dbReference type="VEuPathDB" id="HostDB:ENSCAFG00845023363"/>
<dbReference type="VGNC" id="VGNC:44666">
    <property type="gene designation" value="PLEK"/>
</dbReference>
<dbReference type="eggNOG" id="ENOG502QQIA">
    <property type="taxonomic scope" value="Eukaryota"/>
</dbReference>
<dbReference type="GeneTree" id="ENSGT00940000157885"/>
<dbReference type="HOGENOM" id="CLU_067828_0_0_1"/>
<dbReference type="InParanoid" id="Q6Q308"/>
<dbReference type="OMA" id="GTCVIDW"/>
<dbReference type="OrthoDB" id="185175at2759"/>
<dbReference type="TreeFam" id="TF332246"/>
<dbReference type="Reactome" id="R-CFA-114608">
    <property type="pathway name" value="Platelet degranulation"/>
</dbReference>
<dbReference type="Proteomes" id="UP000002254">
    <property type="component" value="Chromosome 10"/>
</dbReference>
<dbReference type="Proteomes" id="UP000694429">
    <property type="component" value="Chromosome 10"/>
</dbReference>
<dbReference type="Proteomes" id="UP000694542">
    <property type="component" value="Chromosome 10"/>
</dbReference>
<dbReference type="Proteomes" id="UP000805418">
    <property type="component" value="Chromosome 10"/>
</dbReference>
<dbReference type="Bgee" id="ENSCAFG00000003260">
    <property type="expression patterns" value="Expressed in granulocyte and 47 other cell types or tissues"/>
</dbReference>
<dbReference type="GO" id="GO:0005886">
    <property type="term" value="C:plasma membrane"/>
    <property type="evidence" value="ECO:0000318"/>
    <property type="project" value="GO_Central"/>
</dbReference>
<dbReference type="GO" id="GO:0030036">
    <property type="term" value="P:actin cytoskeleton organization"/>
    <property type="evidence" value="ECO:0000318"/>
    <property type="project" value="GO_Central"/>
</dbReference>
<dbReference type="GO" id="GO:0035556">
    <property type="term" value="P:intracellular signal transduction"/>
    <property type="evidence" value="ECO:0007669"/>
    <property type="project" value="InterPro"/>
</dbReference>
<dbReference type="CDD" id="cd04445">
    <property type="entry name" value="DEP_PLEK1"/>
    <property type="match status" value="1"/>
</dbReference>
<dbReference type="CDD" id="cd13301">
    <property type="entry name" value="PH1_Pleckstrin_2"/>
    <property type="match status" value="1"/>
</dbReference>
<dbReference type="CDD" id="cd13302">
    <property type="entry name" value="PH2_Pleckstrin_2"/>
    <property type="match status" value="1"/>
</dbReference>
<dbReference type="FunFam" id="1.10.10.10:FF:000269">
    <property type="entry name" value="Pleckstrin"/>
    <property type="match status" value="1"/>
</dbReference>
<dbReference type="FunFam" id="2.30.29.30:FF:000223">
    <property type="entry name" value="Pleckstrin"/>
    <property type="match status" value="1"/>
</dbReference>
<dbReference type="FunFam" id="2.30.29.30:FF:000226">
    <property type="entry name" value="Pleckstrin"/>
    <property type="match status" value="1"/>
</dbReference>
<dbReference type="Gene3D" id="2.30.29.30">
    <property type="entry name" value="Pleckstrin-homology domain (PH domain)/Phosphotyrosine-binding domain (PTB)"/>
    <property type="match status" value="2"/>
</dbReference>
<dbReference type="Gene3D" id="1.10.10.10">
    <property type="entry name" value="Winged helix-like DNA-binding domain superfamily/Winged helix DNA-binding domain"/>
    <property type="match status" value="1"/>
</dbReference>
<dbReference type="InterPro" id="IPR000591">
    <property type="entry name" value="DEP_dom"/>
</dbReference>
<dbReference type="InterPro" id="IPR011993">
    <property type="entry name" value="PH-like_dom_sf"/>
</dbReference>
<dbReference type="InterPro" id="IPR001849">
    <property type="entry name" value="PH_domain"/>
</dbReference>
<dbReference type="InterPro" id="IPR037370">
    <property type="entry name" value="Pleckstrin"/>
</dbReference>
<dbReference type="InterPro" id="IPR037371">
    <property type="entry name" value="PLEK_DEP"/>
</dbReference>
<dbReference type="InterPro" id="IPR036388">
    <property type="entry name" value="WH-like_DNA-bd_sf"/>
</dbReference>
<dbReference type="InterPro" id="IPR036390">
    <property type="entry name" value="WH_DNA-bd_sf"/>
</dbReference>
<dbReference type="PANTHER" id="PTHR12092">
    <property type="entry name" value="PLECKSTRIN"/>
    <property type="match status" value="1"/>
</dbReference>
<dbReference type="PANTHER" id="PTHR12092:SF1">
    <property type="entry name" value="PLECKSTRIN"/>
    <property type="match status" value="1"/>
</dbReference>
<dbReference type="Pfam" id="PF00610">
    <property type="entry name" value="DEP"/>
    <property type="match status" value="1"/>
</dbReference>
<dbReference type="Pfam" id="PF00169">
    <property type="entry name" value="PH"/>
    <property type="match status" value="2"/>
</dbReference>
<dbReference type="SMART" id="SM00049">
    <property type="entry name" value="DEP"/>
    <property type="match status" value="1"/>
</dbReference>
<dbReference type="SMART" id="SM00233">
    <property type="entry name" value="PH"/>
    <property type="match status" value="2"/>
</dbReference>
<dbReference type="SUPFAM" id="SSF50729">
    <property type="entry name" value="PH domain-like"/>
    <property type="match status" value="2"/>
</dbReference>
<dbReference type="SUPFAM" id="SSF46785">
    <property type="entry name" value="Winged helix' DNA-binding domain"/>
    <property type="match status" value="1"/>
</dbReference>
<dbReference type="PROSITE" id="PS50186">
    <property type="entry name" value="DEP"/>
    <property type="match status" value="1"/>
</dbReference>
<dbReference type="PROSITE" id="PS50003">
    <property type="entry name" value="PH_DOMAIN"/>
    <property type="match status" value="2"/>
</dbReference>
<sequence>MEPKRIREGYLVKRGSVFNTWKPMWVVLLEDGIEFYKKKSDNSPKGMIPLKGSTLTSPCQDFGKRMFVFKITTTKQQDHFFQAAFLEERDSWVRDTKKAIKCIEGGQKFARKSTRRSIRLPETVDLGALYLSMKDIEKGIKELNLEKDKKIFNHCFTGNCVIDWLVSNKSVRNRQEGLMIASSLLGEGYLQPAGELSKNAADGMAEHPFLDNPDAFYYFPDSGFFCEENSSDDDVILKEEFRGVIIKQGCLLKQGHRRKNWKVRKFILREDPAYLHYYDPAAGGEEPLGAIHLRGCVVTSVESNPDVRKSEEENLFEIITADEVHYFLQAATPKERTEWIKAIQVASRTGK</sequence>
<protein>
    <recommendedName>
        <fullName>Pleckstrin</fullName>
    </recommendedName>
</protein>
<name>PLEK_CANLF</name>
<gene>
    <name type="primary">PLEK</name>
</gene>